<dbReference type="EMBL" id="M31431">
    <property type="protein sequence ID" value="AAA25420.1"/>
    <property type="molecule type" value="Genomic_DNA"/>
</dbReference>
<dbReference type="EMBL" id="L43967">
    <property type="protein sequence ID" value="AAC71410.1"/>
    <property type="molecule type" value="Genomic_DNA"/>
</dbReference>
<dbReference type="EMBL" id="X61522">
    <property type="protein sequence ID" value="CAA43734.1"/>
    <property type="molecule type" value="Genomic_DNA"/>
</dbReference>
<dbReference type="EMBL" id="U02209">
    <property type="protein sequence ID" value="AAD12501.1"/>
    <property type="molecule type" value="Genomic_DNA"/>
</dbReference>
<dbReference type="EMBL" id="U01694">
    <property type="protein sequence ID" value="AAB01007.1"/>
    <property type="molecule type" value="Genomic_DNA"/>
</dbReference>
<dbReference type="EMBL" id="U01779">
    <property type="protein sequence ID" value="AAD10599.1"/>
    <property type="molecule type" value="Genomic_DNA"/>
</dbReference>
<dbReference type="EMBL" id="U02159">
    <property type="protein sequence ID" value="AAD12441.1"/>
    <property type="molecule type" value="Genomic_DNA"/>
</dbReference>
<dbReference type="PIR" id="A30588">
    <property type="entry name" value="A30588"/>
</dbReference>
<dbReference type="RefSeq" id="WP_010869366.1">
    <property type="nucleotide sequence ID" value="NC_000908.2"/>
</dbReference>
<dbReference type="PDB" id="6RCC">
    <property type="method" value="X-ray"/>
    <property type="resolution" value="1.43 A"/>
    <property type="chains" value="X=1251-1351"/>
</dbReference>
<dbReference type="PDB" id="6RCD">
    <property type="method" value="X-ray"/>
    <property type="resolution" value="1.98 A"/>
    <property type="chains" value="A/B/C/D/E/F/G/X=1251-1351"/>
</dbReference>
<dbReference type="PDB" id="6RUT">
    <property type="method" value="X-ray"/>
    <property type="resolution" value="2.65 A"/>
    <property type="chains" value="B/D/F/H=23-1352"/>
</dbReference>
<dbReference type="PDB" id="6S3U">
    <property type="method" value="X-ray"/>
    <property type="resolution" value="3.24 A"/>
    <property type="chains" value="A/B/C/D/E/F=54-1351"/>
</dbReference>
<dbReference type="PDB" id="6YRK">
    <property type="method" value="EM"/>
    <property type="resolution" value="4.10 A"/>
    <property type="chains" value="B=59-1243"/>
</dbReference>
<dbReference type="PDB" id="8PBX">
    <property type="method" value="EM"/>
    <property type="resolution" value="3.30 A"/>
    <property type="chains" value="B=1-1444"/>
</dbReference>
<dbReference type="PDB" id="8PBY">
    <property type="method" value="EM"/>
    <property type="resolution" value="3.70 A"/>
    <property type="chains" value="B=1-1444"/>
</dbReference>
<dbReference type="PDB" id="8PBZ">
    <property type="method" value="EM"/>
    <property type="resolution" value="11.00 A"/>
    <property type="chains" value="B/E=1-1444"/>
</dbReference>
<dbReference type="PDB" id="8PC0">
    <property type="method" value="EM"/>
    <property type="resolution" value="17.00 A"/>
    <property type="chains" value="C=1-1444"/>
</dbReference>
<dbReference type="PDB" id="8PC1">
    <property type="method" value="EM"/>
    <property type="resolution" value="18.00 A"/>
    <property type="chains" value="B=1-1444"/>
</dbReference>
<dbReference type="PDBsum" id="6RCC"/>
<dbReference type="PDBsum" id="6RCD"/>
<dbReference type="PDBsum" id="6RUT"/>
<dbReference type="PDBsum" id="6S3U"/>
<dbReference type="PDBsum" id="6YRK"/>
<dbReference type="PDBsum" id="8PBX"/>
<dbReference type="PDBsum" id="8PBY"/>
<dbReference type="PDBsum" id="8PBZ"/>
<dbReference type="PDBsum" id="8PC0"/>
<dbReference type="PDBsum" id="8PC1"/>
<dbReference type="EMDB" id="EMD-10890"/>
<dbReference type="EMDB" id="EMD-17587"/>
<dbReference type="EMDB" id="EMD-17588"/>
<dbReference type="EMDB" id="EMD-17591"/>
<dbReference type="EMDB" id="EMD-17592"/>
<dbReference type="EMDB" id="EMD-17593"/>
<dbReference type="SMR" id="P20796"/>
<dbReference type="STRING" id="243273.MG_191"/>
<dbReference type="GeneID" id="88282323"/>
<dbReference type="KEGG" id="mge:MG_191"/>
<dbReference type="eggNOG" id="ENOG5030MWU">
    <property type="taxonomic scope" value="Bacteria"/>
</dbReference>
<dbReference type="HOGENOM" id="CLU_251889_0_0_14"/>
<dbReference type="InParanoid" id="P20796"/>
<dbReference type="OrthoDB" id="397662at2"/>
<dbReference type="BioCyc" id="MGEN243273:G1GJ2-219-MONOMER"/>
<dbReference type="Proteomes" id="UP000000807">
    <property type="component" value="Chromosome"/>
</dbReference>
<dbReference type="GO" id="GO:0005886">
    <property type="term" value="C:plasma membrane"/>
    <property type="evidence" value="ECO:0007669"/>
    <property type="project" value="UniProtKB-SubCell"/>
</dbReference>
<dbReference type="GO" id="GO:0020035">
    <property type="term" value="P:adhesion of symbiont to microvasculature"/>
    <property type="evidence" value="ECO:0007669"/>
    <property type="project" value="UniProtKB-KW"/>
</dbReference>
<dbReference type="InterPro" id="IPR022400">
    <property type="entry name" value="Adhesin_P1"/>
</dbReference>
<dbReference type="InterPro" id="IPR004940">
    <property type="entry name" value="Adhesin_P1_C"/>
</dbReference>
<dbReference type="InterPro" id="IPR022116">
    <property type="entry name" value="P1_N"/>
</dbReference>
<dbReference type="NCBIfam" id="TIGR03839">
    <property type="entry name" value="termin_org_P1"/>
    <property type="match status" value="1"/>
</dbReference>
<dbReference type="Pfam" id="PF03257">
    <property type="entry name" value="Adhesin_P1_C"/>
    <property type="match status" value="1"/>
</dbReference>
<dbReference type="Pfam" id="PF12378">
    <property type="entry name" value="P1_N"/>
    <property type="match status" value="1"/>
</dbReference>
<name>ADP1_MYCGE</name>
<comment type="function">
    <text>The protein is the major adhesin mediating the attachment of this mycoplasma to the ciliated epithelium.</text>
</comment>
<comment type="subcellular location">
    <subcellularLocation>
        <location evidence="3">Cell membrane</location>
        <topology evidence="3">Single-pass type I membrane protein</topology>
    </subcellularLocation>
</comment>
<comment type="similarity">
    <text evidence="3">Belongs to the adhesin P1 family.</text>
</comment>
<evidence type="ECO:0000255" key="1"/>
<evidence type="ECO:0000256" key="2">
    <source>
        <dbReference type="SAM" id="MobiDB-lite"/>
    </source>
</evidence>
<evidence type="ECO:0000305" key="3"/>
<evidence type="ECO:0007829" key="4">
    <source>
        <dbReference type="PDB" id="6RCC"/>
    </source>
</evidence>
<evidence type="ECO:0007829" key="5">
    <source>
        <dbReference type="PDB" id="6RCD"/>
    </source>
</evidence>
<evidence type="ECO:0007829" key="6">
    <source>
        <dbReference type="PDB" id="6RUT"/>
    </source>
</evidence>
<evidence type="ECO:0007829" key="7">
    <source>
        <dbReference type="PDB" id="6S3U"/>
    </source>
</evidence>
<evidence type="ECO:0007829" key="8">
    <source>
        <dbReference type="PDB" id="8PBX"/>
    </source>
</evidence>
<organism>
    <name type="scientific">Mycoplasma genitalium (strain ATCC 33530 / DSM 19775 / NCTC 10195 / G37)</name>
    <name type="common">Mycoplasmoides genitalium</name>
    <dbReference type="NCBI Taxonomy" id="243273"/>
    <lineage>
        <taxon>Bacteria</taxon>
        <taxon>Bacillati</taxon>
        <taxon>Mycoplasmatota</taxon>
        <taxon>Mycoplasmoidales</taxon>
        <taxon>Mycoplasmoidaceae</taxon>
        <taxon>Mycoplasmoides</taxon>
    </lineage>
</organism>
<protein>
    <recommendedName>
        <fullName>Adhesin P1</fullName>
    </recommendedName>
    <alternativeName>
        <fullName>Attachment protein</fullName>
    </alternativeName>
    <alternativeName>
        <fullName>Cytadhesin P1</fullName>
    </alternativeName>
    <alternativeName>
        <fullName>MgPa</fullName>
    </alternativeName>
</protein>
<keyword id="KW-0002">3D-structure</keyword>
<keyword id="KW-1003">Cell membrane</keyword>
<keyword id="KW-0200">Cytadherence</keyword>
<keyword id="KW-0472">Membrane</keyword>
<keyword id="KW-1185">Reference proteome</keyword>
<keyword id="KW-0732">Signal</keyword>
<keyword id="KW-0812">Transmembrane</keyword>
<keyword id="KW-1133">Transmembrane helix</keyword>
<feature type="signal peptide" evidence="1">
    <location>
        <begin position="1"/>
        <end position="30"/>
    </location>
</feature>
<feature type="chain" id="PRO_0000020628" description="Adhesin P1">
    <location>
        <begin position="31"/>
        <end position="1444"/>
    </location>
</feature>
<feature type="transmembrane region" description="Helical" evidence="1">
    <location>
        <begin position="1353"/>
        <end position="1373"/>
    </location>
</feature>
<feature type="region of interest" description="Disordered" evidence="2">
    <location>
        <begin position="231"/>
        <end position="283"/>
    </location>
</feature>
<feature type="region of interest" description="Disordered" evidence="2">
    <location>
        <begin position="845"/>
        <end position="885"/>
    </location>
</feature>
<feature type="region of interest" description="Disordered" evidence="2">
    <location>
        <begin position="927"/>
        <end position="949"/>
    </location>
</feature>
<feature type="region of interest" description="Disordered" evidence="2">
    <location>
        <begin position="1419"/>
        <end position="1444"/>
    </location>
</feature>
<feature type="compositionally biased region" description="Basic and acidic residues" evidence="2">
    <location>
        <begin position="240"/>
        <end position="257"/>
    </location>
</feature>
<feature type="compositionally biased region" description="Low complexity" evidence="2">
    <location>
        <begin position="258"/>
        <end position="272"/>
    </location>
</feature>
<feature type="compositionally biased region" description="Polar residues" evidence="2">
    <location>
        <begin position="851"/>
        <end position="860"/>
    </location>
</feature>
<feature type="compositionally biased region" description="Polar residues" evidence="2">
    <location>
        <begin position="868"/>
        <end position="878"/>
    </location>
</feature>
<feature type="compositionally biased region" description="Basic and acidic residues" evidence="2">
    <location>
        <begin position="933"/>
        <end position="946"/>
    </location>
</feature>
<feature type="compositionally biased region" description="Pro residues" evidence="2">
    <location>
        <begin position="1431"/>
        <end position="1444"/>
    </location>
</feature>
<feature type="sequence conflict" description="In Ref. 5." evidence="3" ref="5">
    <original>SQ</original>
    <variation>FA</variation>
    <location>
        <begin position="1160"/>
        <end position="1161"/>
    </location>
</feature>
<feature type="strand" evidence="6">
    <location>
        <begin position="65"/>
        <end position="67"/>
    </location>
</feature>
<feature type="turn" evidence="6">
    <location>
        <begin position="71"/>
        <end position="73"/>
    </location>
</feature>
<feature type="strand" evidence="6">
    <location>
        <begin position="77"/>
        <end position="80"/>
    </location>
</feature>
<feature type="strand" evidence="6">
    <location>
        <begin position="82"/>
        <end position="84"/>
    </location>
</feature>
<feature type="strand" evidence="6">
    <location>
        <begin position="86"/>
        <end position="93"/>
    </location>
</feature>
<feature type="helix" evidence="6">
    <location>
        <begin position="100"/>
        <end position="102"/>
    </location>
</feature>
<feature type="strand" evidence="7">
    <location>
        <begin position="107"/>
        <end position="109"/>
    </location>
</feature>
<feature type="helix" evidence="6">
    <location>
        <begin position="111"/>
        <end position="123"/>
    </location>
</feature>
<feature type="strand" evidence="6">
    <location>
        <begin position="128"/>
        <end position="133"/>
    </location>
</feature>
<feature type="strand" evidence="6">
    <location>
        <begin position="139"/>
        <end position="141"/>
    </location>
</feature>
<feature type="turn" evidence="6">
    <location>
        <begin position="145"/>
        <end position="147"/>
    </location>
</feature>
<feature type="strand" evidence="6">
    <location>
        <begin position="158"/>
        <end position="160"/>
    </location>
</feature>
<feature type="turn" evidence="6">
    <location>
        <begin position="166"/>
        <end position="168"/>
    </location>
</feature>
<feature type="helix" evidence="6">
    <location>
        <begin position="180"/>
        <end position="183"/>
    </location>
</feature>
<feature type="strand" evidence="6">
    <location>
        <begin position="187"/>
        <end position="193"/>
    </location>
</feature>
<feature type="strand" evidence="6">
    <location>
        <begin position="195"/>
        <end position="197"/>
    </location>
</feature>
<feature type="strand" evidence="6">
    <location>
        <begin position="200"/>
        <end position="206"/>
    </location>
</feature>
<feature type="helix" evidence="6">
    <location>
        <begin position="208"/>
        <end position="211"/>
    </location>
</feature>
<feature type="helix" evidence="6">
    <location>
        <begin position="213"/>
        <end position="215"/>
    </location>
</feature>
<feature type="turn" evidence="6">
    <location>
        <begin position="218"/>
        <end position="220"/>
    </location>
</feature>
<feature type="turn" evidence="6">
    <location>
        <begin position="236"/>
        <end position="239"/>
    </location>
</feature>
<feature type="turn" evidence="6">
    <location>
        <begin position="250"/>
        <end position="253"/>
    </location>
</feature>
<feature type="strand" evidence="6">
    <location>
        <begin position="277"/>
        <end position="282"/>
    </location>
</feature>
<feature type="strand" evidence="6">
    <location>
        <begin position="291"/>
        <end position="293"/>
    </location>
</feature>
<feature type="helix" evidence="6">
    <location>
        <begin position="294"/>
        <end position="296"/>
    </location>
</feature>
<feature type="strand" evidence="6">
    <location>
        <begin position="304"/>
        <end position="308"/>
    </location>
</feature>
<feature type="helix" evidence="6">
    <location>
        <begin position="313"/>
        <end position="316"/>
    </location>
</feature>
<feature type="helix" evidence="6">
    <location>
        <begin position="327"/>
        <end position="332"/>
    </location>
</feature>
<feature type="strand" evidence="6">
    <location>
        <begin position="336"/>
        <end position="345"/>
    </location>
</feature>
<feature type="strand" evidence="6">
    <location>
        <begin position="349"/>
        <end position="351"/>
    </location>
</feature>
<feature type="strand" evidence="6">
    <location>
        <begin position="353"/>
        <end position="361"/>
    </location>
</feature>
<feature type="helix" evidence="6">
    <location>
        <begin position="363"/>
        <end position="367"/>
    </location>
</feature>
<feature type="helix" evidence="6">
    <location>
        <begin position="372"/>
        <end position="375"/>
    </location>
</feature>
<feature type="turn" evidence="6">
    <location>
        <begin position="381"/>
        <end position="383"/>
    </location>
</feature>
<feature type="helix" evidence="6">
    <location>
        <begin position="384"/>
        <end position="392"/>
    </location>
</feature>
<feature type="strand" evidence="6">
    <location>
        <begin position="398"/>
        <end position="400"/>
    </location>
</feature>
<feature type="turn" evidence="6">
    <location>
        <begin position="402"/>
        <end position="404"/>
    </location>
</feature>
<feature type="helix" evidence="6">
    <location>
        <begin position="406"/>
        <end position="408"/>
    </location>
</feature>
<feature type="helix" evidence="6">
    <location>
        <begin position="412"/>
        <end position="415"/>
    </location>
</feature>
<feature type="strand" evidence="6">
    <location>
        <begin position="417"/>
        <end position="419"/>
    </location>
</feature>
<feature type="helix" evidence="6">
    <location>
        <begin position="430"/>
        <end position="432"/>
    </location>
</feature>
<feature type="helix" evidence="6">
    <location>
        <begin position="447"/>
        <end position="452"/>
    </location>
</feature>
<feature type="strand" evidence="6">
    <location>
        <begin position="457"/>
        <end position="460"/>
    </location>
</feature>
<feature type="strand" evidence="6">
    <location>
        <begin position="463"/>
        <end position="466"/>
    </location>
</feature>
<feature type="turn" evidence="6">
    <location>
        <begin position="472"/>
        <end position="474"/>
    </location>
</feature>
<feature type="strand" evidence="6">
    <location>
        <begin position="485"/>
        <end position="492"/>
    </location>
</feature>
<feature type="turn" evidence="6">
    <location>
        <begin position="493"/>
        <end position="496"/>
    </location>
</feature>
<feature type="strand" evidence="6">
    <location>
        <begin position="497"/>
        <end position="504"/>
    </location>
</feature>
<feature type="helix" evidence="6">
    <location>
        <begin position="505"/>
        <end position="508"/>
    </location>
</feature>
<feature type="turn" evidence="6">
    <location>
        <begin position="509"/>
        <end position="511"/>
    </location>
</feature>
<feature type="helix" evidence="6">
    <location>
        <begin position="514"/>
        <end position="516"/>
    </location>
</feature>
<feature type="strand" evidence="6">
    <location>
        <begin position="537"/>
        <end position="545"/>
    </location>
</feature>
<feature type="strand" evidence="6">
    <location>
        <begin position="548"/>
        <end position="555"/>
    </location>
</feature>
<feature type="strand" evidence="8">
    <location>
        <begin position="561"/>
        <end position="564"/>
    </location>
</feature>
<feature type="helix" evidence="6">
    <location>
        <begin position="568"/>
        <end position="573"/>
    </location>
</feature>
<feature type="helix" evidence="6">
    <location>
        <begin position="575"/>
        <end position="581"/>
    </location>
</feature>
<feature type="strand" evidence="6">
    <location>
        <begin position="597"/>
        <end position="599"/>
    </location>
</feature>
<feature type="helix" evidence="6">
    <location>
        <begin position="605"/>
        <end position="607"/>
    </location>
</feature>
<feature type="strand" evidence="7">
    <location>
        <begin position="610"/>
        <end position="614"/>
    </location>
</feature>
<feature type="strand" evidence="6">
    <location>
        <begin position="619"/>
        <end position="621"/>
    </location>
</feature>
<feature type="helix" evidence="7">
    <location>
        <begin position="626"/>
        <end position="628"/>
    </location>
</feature>
<feature type="helix" evidence="6">
    <location>
        <begin position="634"/>
        <end position="640"/>
    </location>
</feature>
<feature type="turn" evidence="6">
    <location>
        <begin position="641"/>
        <end position="643"/>
    </location>
</feature>
<feature type="strand" evidence="6">
    <location>
        <begin position="650"/>
        <end position="653"/>
    </location>
</feature>
<feature type="helix" evidence="6">
    <location>
        <begin position="662"/>
        <end position="669"/>
    </location>
</feature>
<feature type="strand" evidence="6">
    <location>
        <begin position="675"/>
        <end position="678"/>
    </location>
</feature>
<feature type="strand" evidence="6">
    <location>
        <begin position="692"/>
        <end position="698"/>
    </location>
</feature>
<feature type="helix" evidence="6">
    <location>
        <begin position="700"/>
        <end position="705"/>
    </location>
</feature>
<feature type="helix" evidence="6">
    <location>
        <begin position="714"/>
        <end position="716"/>
    </location>
</feature>
<feature type="helix" evidence="6">
    <location>
        <begin position="722"/>
        <end position="726"/>
    </location>
</feature>
<feature type="helix" evidence="6">
    <location>
        <begin position="740"/>
        <end position="743"/>
    </location>
</feature>
<feature type="strand" evidence="6">
    <location>
        <begin position="747"/>
        <end position="755"/>
    </location>
</feature>
<feature type="helix" evidence="6">
    <location>
        <begin position="758"/>
        <end position="767"/>
    </location>
</feature>
<feature type="turn" evidence="6">
    <location>
        <begin position="771"/>
        <end position="773"/>
    </location>
</feature>
<feature type="strand" evidence="8">
    <location>
        <begin position="776"/>
        <end position="778"/>
    </location>
</feature>
<feature type="strand" evidence="6">
    <location>
        <begin position="804"/>
        <end position="806"/>
    </location>
</feature>
<feature type="helix" evidence="6">
    <location>
        <begin position="807"/>
        <end position="809"/>
    </location>
</feature>
<feature type="turn" evidence="6">
    <location>
        <begin position="817"/>
        <end position="819"/>
    </location>
</feature>
<feature type="strand" evidence="6">
    <location>
        <begin position="822"/>
        <end position="824"/>
    </location>
</feature>
<feature type="strand" evidence="6">
    <location>
        <begin position="827"/>
        <end position="829"/>
    </location>
</feature>
<feature type="strand" evidence="7">
    <location>
        <begin position="832"/>
        <end position="834"/>
    </location>
</feature>
<feature type="strand" evidence="6">
    <location>
        <begin position="837"/>
        <end position="840"/>
    </location>
</feature>
<feature type="strand" evidence="6">
    <location>
        <begin position="845"/>
        <end position="847"/>
    </location>
</feature>
<feature type="strand" evidence="6">
    <location>
        <begin position="854"/>
        <end position="856"/>
    </location>
</feature>
<feature type="helix" evidence="6">
    <location>
        <begin position="864"/>
        <end position="866"/>
    </location>
</feature>
<feature type="strand" evidence="6">
    <location>
        <begin position="867"/>
        <end position="869"/>
    </location>
</feature>
<feature type="strand" evidence="6">
    <location>
        <begin position="876"/>
        <end position="879"/>
    </location>
</feature>
<feature type="strand" evidence="6">
    <location>
        <begin position="881"/>
        <end position="883"/>
    </location>
</feature>
<feature type="helix" evidence="6">
    <location>
        <begin position="897"/>
        <end position="899"/>
    </location>
</feature>
<feature type="helix" evidence="6">
    <location>
        <begin position="904"/>
        <end position="916"/>
    </location>
</feature>
<feature type="strand" evidence="6">
    <location>
        <begin position="921"/>
        <end position="925"/>
    </location>
</feature>
<feature type="helix" evidence="6">
    <location>
        <begin position="935"/>
        <end position="938"/>
    </location>
</feature>
<feature type="helix" evidence="7">
    <location>
        <begin position="941"/>
        <end position="943"/>
    </location>
</feature>
<feature type="helix" evidence="6">
    <location>
        <begin position="947"/>
        <end position="949"/>
    </location>
</feature>
<feature type="strand" evidence="6">
    <location>
        <begin position="953"/>
        <end position="957"/>
    </location>
</feature>
<feature type="helix" evidence="6">
    <location>
        <begin position="962"/>
        <end position="968"/>
    </location>
</feature>
<feature type="strand" evidence="6">
    <location>
        <begin position="971"/>
        <end position="976"/>
    </location>
</feature>
<feature type="strand" evidence="6">
    <location>
        <begin position="989"/>
        <end position="991"/>
    </location>
</feature>
<feature type="strand" evidence="6">
    <location>
        <begin position="993"/>
        <end position="998"/>
    </location>
</feature>
<feature type="strand" evidence="8">
    <location>
        <begin position="1009"/>
        <end position="1014"/>
    </location>
</feature>
<feature type="strand" evidence="6">
    <location>
        <begin position="1016"/>
        <end position="1018"/>
    </location>
</feature>
<feature type="strand" evidence="6">
    <location>
        <begin position="1020"/>
        <end position="1024"/>
    </location>
</feature>
<feature type="strand" evidence="6">
    <location>
        <begin position="1027"/>
        <end position="1036"/>
    </location>
</feature>
<feature type="strand" evidence="6">
    <location>
        <begin position="1044"/>
        <end position="1048"/>
    </location>
</feature>
<feature type="helix" evidence="6">
    <location>
        <begin position="1052"/>
        <end position="1055"/>
    </location>
</feature>
<feature type="helix" evidence="6">
    <location>
        <begin position="1060"/>
        <end position="1062"/>
    </location>
</feature>
<feature type="strand" evidence="6">
    <location>
        <begin position="1063"/>
        <end position="1069"/>
    </location>
</feature>
<feature type="strand" evidence="6">
    <location>
        <begin position="1075"/>
        <end position="1079"/>
    </location>
</feature>
<feature type="helix" evidence="6">
    <location>
        <begin position="1081"/>
        <end position="1083"/>
    </location>
</feature>
<feature type="strand" evidence="8">
    <location>
        <begin position="1088"/>
        <end position="1091"/>
    </location>
</feature>
<feature type="turn" evidence="7">
    <location>
        <begin position="1092"/>
        <end position="1094"/>
    </location>
</feature>
<feature type="strand" evidence="6">
    <location>
        <begin position="1110"/>
        <end position="1112"/>
    </location>
</feature>
<feature type="strand" evidence="6">
    <location>
        <begin position="1117"/>
        <end position="1119"/>
    </location>
</feature>
<feature type="helix" evidence="7">
    <location>
        <begin position="1120"/>
        <end position="1122"/>
    </location>
</feature>
<feature type="helix" evidence="6">
    <location>
        <begin position="1134"/>
        <end position="1136"/>
    </location>
</feature>
<feature type="helix" evidence="6">
    <location>
        <begin position="1138"/>
        <end position="1142"/>
    </location>
</feature>
<feature type="helix" evidence="6">
    <location>
        <begin position="1146"/>
        <end position="1152"/>
    </location>
</feature>
<feature type="helix" evidence="8">
    <location>
        <begin position="1158"/>
        <end position="1160"/>
    </location>
</feature>
<feature type="strand" evidence="6">
    <location>
        <begin position="1168"/>
        <end position="1171"/>
    </location>
</feature>
<feature type="turn" evidence="6">
    <location>
        <begin position="1177"/>
        <end position="1180"/>
    </location>
</feature>
<feature type="turn" evidence="6">
    <location>
        <begin position="1183"/>
        <end position="1185"/>
    </location>
</feature>
<feature type="strand" evidence="6">
    <location>
        <begin position="1189"/>
        <end position="1191"/>
    </location>
</feature>
<feature type="helix" evidence="6">
    <location>
        <begin position="1193"/>
        <end position="1202"/>
    </location>
</feature>
<feature type="strand" evidence="6">
    <location>
        <begin position="1204"/>
        <end position="1206"/>
    </location>
</feature>
<feature type="helix" evidence="6">
    <location>
        <begin position="1208"/>
        <end position="1210"/>
    </location>
</feature>
<feature type="strand" evidence="6">
    <location>
        <begin position="1213"/>
        <end position="1215"/>
    </location>
</feature>
<feature type="strand" evidence="6">
    <location>
        <begin position="1217"/>
        <end position="1220"/>
    </location>
</feature>
<feature type="strand" evidence="6">
    <location>
        <begin position="1228"/>
        <end position="1230"/>
    </location>
</feature>
<feature type="strand" evidence="6">
    <location>
        <begin position="1235"/>
        <end position="1237"/>
    </location>
</feature>
<feature type="helix" evidence="6">
    <location>
        <begin position="1247"/>
        <end position="1250"/>
    </location>
</feature>
<feature type="helix" evidence="7">
    <location>
        <begin position="1256"/>
        <end position="1258"/>
    </location>
</feature>
<feature type="helix" evidence="4">
    <location>
        <begin position="1261"/>
        <end position="1263"/>
    </location>
</feature>
<feature type="helix" evidence="4">
    <location>
        <begin position="1269"/>
        <end position="1271"/>
    </location>
</feature>
<feature type="turn" evidence="4">
    <location>
        <begin position="1275"/>
        <end position="1277"/>
    </location>
</feature>
<feature type="helix" evidence="4">
    <location>
        <begin position="1282"/>
        <end position="1284"/>
    </location>
</feature>
<feature type="helix" evidence="4">
    <location>
        <begin position="1285"/>
        <end position="1288"/>
    </location>
</feature>
<feature type="helix" evidence="4">
    <location>
        <begin position="1297"/>
        <end position="1299"/>
    </location>
</feature>
<feature type="strand" evidence="4">
    <location>
        <begin position="1300"/>
        <end position="1308"/>
    </location>
</feature>
<feature type="turn" evidence="4">
    <location>
        <begin position="1309"/>
        <end position="1312"/>
    </location>
</feature>
<feature type="strand" evidence="4">
    <location>
        <begin position="1313"/>
        <end position="1321"/>
    </location>
</feature>
<feature type="turn" evidence="4">
    <location>
        <begin position="1323"/>
        <end position="1325"/>
    </location>
</feature>
<feature type="strand" evidence="4">
    <location>
        <begin position="1328"/>
        <end position="1330"/>
    </location>
</feature>
<feature type="strand" evidence="6">
    <location>
        <begin position="1334"/>
        <end position="1337"/>
    </location>
</feature>
<feature type="strand" evidence="4">
    <location>
        <begin position="1340"/>
        <end position="1343"/>
    </location>
</feature>
<feature type="strand" evidence="5">
    <location>
        <begin position="1348"/>
        <end position="1350"/>
    </location>
</feature>
<sequence length="1444" mass="159651">MHQPKKRLAKKSWAFLTAALTLGVITGVGGYFLFNQNKQRSSVSNFAYQPKQLSVKHQQAVDETLTPWTWNNNNFSSLKITGENPGSFGLVRSQNDNLNISSVTKNSSDDNLKYLNAVEKYLDGQQNFAIRRYDNNGRALYDINLAKMENPSTVQRGLNGEPIFDPFKGFGLTGNAPTDWNEIKGKVPVEVVQSPHSPNLYFVLLVPKVALEYHNLNNQVVKESLEVKATQSSFNPTQRLQKDSPVKDSSKQGEKLSETTASSMSSGMATSTRAKALKVEVERGSQSDSLLKNDFAKKPLKHKNSSGEVKLEAEKEFTEAWKPLLTTDQIAREKGMGATVVSFYDAPYSENHTAFGLVDHIDPKKMVENYPPSWKTPKWNHHGIWDYNARNLLLQTTGFFNPRRHPEWFDEGQAKADNTSPGFKVGDTDHKKDGFKKNSSSPIALPFEAYFANIGNMVAIGNSVFIFGGNGHATKMFTTNPLSIGVFRIKYTDNFSKSSVTGWPYAVLFGGLINPQTNGLKDLPLGTNRWFEYVPRMAVSGVKWVGNQLVLAGTLTMGDTATVPRLKYDQLEKHLNLVAQGQGLLREDLQIFTPYGWANRPDIPVGAWLQDEMGSKFGPHYFLNNPDIQDNVNNDTVEALISSYKNTDKLKHVYPYRYSGLYAWQLFNWSNKLTNTPLSANFVNENSYAPNSLFAAILNEDLLTGLSDKIFYGKENEFAENEADRFNQLLSLNPNPNTNWARYLNVVQRFTTGPNLDSSTFDQFLDFLPWIGNGKPFSNSPSPSTSASSSTPLPTFSNINVGVKSMITQHLNKENTRWVFIPNFSPDIWTGAGYRVQSANQKNGIPFEQVKPSNNSTPFDPNSDDNKVTPSGGSSKPTTYPALPNSISPTSDWINALTFTNKNNPQRNQLLLRSLLGTIPVLINKSGDSNDQFNKDSEQKWDKTETNEGNLPGFGEVNGLYNAALLHTYGFFGTNTNSTDPKIGFKADSSSSSSSTLVGSGLNWTSQDVGNLVVINDTSFGFQLGGWFITFTDFIRPRTGYLGITLSSLQDQTIIWADQPWTSFKGSYLDSDGTPKSLWDPTALKSLPNSSTTYDTNPTLSPSFQLYQPNKVKAYQTTNTYNKLIEPVDATSAATNMTSLLKLLTTKNIKAKLGKGTASSQGNNNGGGVSQTINTITTTGNISEGLKEETSIQAETLKKFFDSKQNNKSEIGIGDSTFTKMDGKLTGVVSTPLVNLINGQGATSDSDTEKISFKPGNQIDFNRLFTLPVTELFDPNTMFVYDQYVPLLVNLPSGFDQASIRLKVISYSVENQTLGVRLEFKDPQTQQFIPVLNASSTGPQTVFQPFNQWADYVLPLIVTVPIVVIILSVTLGLTIGIPMHRNKKALQAGFDLSNKKVDVLTKAVGSVFKEIINRTGISNAPKKLKQATPTKPTPKTPPKPPVKQ</sequence>
<reference key="1">
    <citation type="journal article" date="1989" name="Infect. Immun.">
        <title>DNA and protein sequence homologies between the adhesins of Mycoplasma genitalium and Mycoplasma pneumoniae.</title>
        <authorList>
            <person name="Dallo S.F."/>
            <person name="Chavoya A."/>
            <person name="Su C.-J."/>
            <person name="Baseman J.B."/>
        </authorList>
    </citation>
    <scope>NUCLEOTIDE SEQUENCE [GENOMIC DNA]</scope>
    <source>
        <strain>ATCC 33530 / DSM 19775 / NCTC 10195 / G37</strain>
    </source>
</reference>
<reference key="2">
    <citation type="journal article" date="1989" name="Gene">
        <title>Nucleotide sequence of the MgPa (mgp) operon of Mycoplasma genitalium and comparison to the P1 (mpp) operon of Mycoplasma pneumoniae.</title>
        <authorList>
            <person name="Inamine J.M."/>
            <person name="Loechel S."/>
            <person name="Collier A.M."/>
            <person name="Barile M.F."/>
            <person name="Hu P.-C."/>
        </authorList>
    </citation>
    <scope>NUCLEOTIDE SEQUENCE [GENOMIC DNA]</scope>
    <source>
        <strain>ATCC 33530 / DSM 19775 / NCTC 10195 / G37</strain>
    </source>
</reference>
<reference key="3">
    <citation type="journal article" date="1995" name="Science">
        <title>The minimal gene complement of Mycoplasma genitalium.</title>
        <authorList>
            <person name="Fraser C.M."/>
            <person name="Gocayne J.D."/>
            <person name="White O."/>
            <person name="Adams M.D."/>
            <person name="Clayton R.A."/>
            <person name="Fleischmann R.D."/>
            <person name="Bult C.J."/>
            <person name="Kerlavage A.R."/>
            <person name="Sutton G.G."/>
            <person name="Kelley J.M."/>
            <person name="Fritchman J.L."/>
            <person name="Weidman J.F."/>
            <person name="Small K.V."/>
            <person name="Sandusky M."/>
            <person name="Fuhrmann J.L."/>
            <person name="Nguyen D.T."/>
            <person name="Utterback T.R."/>
            <person name="Saudek D.M."/>
            <person name="Phillips C.A."/>
            <person name="Merrick J.M."/>
            <person name="Tomb J.-F."/>
            <person name="Dougherty B.A."/>
            <person name="Bott K.F."/>
            <person name="Hu P.-C."/>
            <person name="Lucier T.S."/>
            <person name="Peterson S.N."/>
            <person name="Smith H.O."/>
            <person name="Hutchison C.A. III"/>
            <person name="Venter J.C."/>
        </authorList>
    </citation>
    <scope>NUCLEOTIDE SEQUENCE [LARGE SCALE GENOMIC DNA]</scope>
    <source>
        <strain>ATCC 33530 / DSM 19775 / NCTC 10195 / G37</strain>
    </source>
</reference>
<reference key="4">
    <citation type="journal article" date="1991" name="Nucleic Acids Res.">
        <title>A random sequencing approach for placing markers on the physical map of Mycoplasma genitalium.</title>
        <authorList>
            <person name="Peterson S.N."/>
            <person name="Schramm N."/>
            <person name="Hu P.-C."/>
            <person name="Bott K.F."/>
            <person name="Hutchison C.A. III"/>
        </authorList>
    </citation>
    <scope>NUCLEOTIDE SEQUENCE [GENOMIC DNA] OF 106-177</scope>
    <source>
        <strain>ATCC 33530 / DSM 19775 / NCTC 10195 / G37</strain>
    </source>
</reference>
<reference key="5">
    <citation type="journal article" date="1993" name="J. Bacteriol.">
        <title>A survey of the Mycoplasma genitalium genome by using random sequencing.</title>
        <authorList>
            <person name="Peterson S.N."/>
            <person name="Hu P.-C."/>
            <person name="Bott K.F."/>
            <person name="Hutchison C.A. III"/>
        </authorList>
    </citation>
    <scope>NUCLEOTIDE SEQUENCE [GENOMIC DNA] OF 468-588; 627-723; 980-1162 AND 1235-1289</scope>
    <source>
        <strain>ATCC 33530 / DSM 19775 / NCTC 10195 / G37</strain>
    </source>
</reference>
<gene>
    <name type="primary">mgpA</name>
    <name type="ordered locus">MG191</name>
</gene>
<accession>P20796</accession>
<accession>Q49286</accession>
<proteinExistence type="evidence at protein level"/>